<name>RLME_METAR</name>
<evidence type="ECO:0000255" key="1">
    <source>
        <dbReference type="HAMAP-Rule" id="MF_01547"/>
    </source>
</evidence>
<organism>
    <name type="scientific">Methanocella arvoryzae (strain DSM 22066 / NBRC 105507 / MRE50)</name>
    <dbReference type="NCBI Taxonomy" id="351160"/>
    <lineage>
        <taxon>Archaea</taxon>
        <taxon>Methanobacteriati</taxon>
        <taxon>Methanobacteriota</taxon>
        <taxon>Stenosarchaea group</taxon>
        <taxon>Methanomicrobia</taxon>
        <taxon>Methanocellales</taxon>
        <taxon>Methanocellaceae</taxon>
        <taxon>Methanocella</taxon>
    </lineage>
</organism>
<sequence>MPAKKRDHYYNKAKQMGYRSRASFKLQFINKKHHIIKKGDTVVDLGAAPGGWLQVAKELNGGGKVIGVDLQRIEPIEGVETIKGDMTSPETQARIFEIVDEVDTVICDAAPNLSGNWALDHARSIDLATVALDVATKLLKKGGNFVVKVFQGDLYENYVKEVGKRFSYATTYKSQASRQQSAEIYVIGKGFLTTSLRKGDVVDVTIDAMGKTGDGIAHVDDFVVFVKGGSVGDKLKIKITDVKPSFAFADIVEKEK</sequence>
<feature type="chain" id="PRO_0000282823" description="Ribosomal RNA large subunit methyltransferase E">
    <location>
        <begin position="1"/>
        <end position="256"/>
    </location>
</feature>
<feature type="domain" description="TRAM" evidence="1">
    <location>
        <begin position="195"/>
        <end position="253"/>
    </location>
</feature>
<feature type="active site" description="Proton acceptor" evidence="1">
    <location>
        <position position="148"/>
    </location>
</feature>
<feature type="binding site" evidence="1">
    <location>
        <position position="50"/>
    </location>
    <ligand>
        <name>S-adenosyl-L-methionine</name>
        <dbReference type="ChEBI" id="CHEBI:59789"/>
    </ligand>
</feature>
<feature type="binding site" evidence="1">
    <location>
        <position position="52"/>
    </location>
    <ligand>
        <name>S-adenosyl-L-methionine</name>
        <dbReference type="ChEBI" id="CHEBI:59789"/>
    </ligand>
</feature>
<feature type="binding site" evidence="1">
    <location>
        <position position="69"/>
    </location>
    <ligand>
        <name>S-adenosyl-L-methionine</name>
        <dbReference type="ChEBI" id="CHEBI:59789"/>
    </ligand>
</feature>
<feature type="binding site" evidence="1">
    <location>
        <position position="85"/>
    </location>
    <ligand>
        <name>S-adenosyl-L-methionine</name>
        <dbReference type="ChEBI" id="CHEBI:59789"/>
    </ligand>
</feature>
<feature type="binding site" evidence="1">
    <location>
        <position position="108"/>
    </location>
    <ligand>
        <name>S-adenosyl-L-methionine</name>
        <dbReference type="ChEBI" id="CHEBI:59789"/>
    </ligand>
</feature>
<dbReference type="EC" id="2.1.1.166" evidence="1"/>
<dbReference type="EMBL" id="AM114193">
    <property type="protein sequence ID" value="CAJ37784.1"/>
    <property type="molecule type" value="Genomic_DNA"/>
</dbReference>
<dbReference type="RefSeq" id="WP_012034804.1">
    <property type="nucleotide sequence ID" value="NC_009464.1"/>
</dbReference>
<dbReference type="SMR" id="Q0W1F9"/>
<dbReference type="STRING" id="351160.RCIX2745"/>
<dbReference type="GeneID" id="5143441"/>
<dbReference type="KEGG" id="rci:RCIX2745"/>
<dbReference type="PATRIC" id="fig|351160.9.peg.501"/>
<dbReference type="eggNOG" id="arCOG00079">
    <property type="taxonomic scope" value="Archaea"/>
</dbReference>
<dbReference type="OrthoDB" id="26307at2157"/>
<dbReference type="Proteomes" id="UP000000663">
    <property type="component" value="Chromosome"/>
</dbReference>
<dbReference type="GO" id="GO:0005737">
    <property type="term" value="C:cytoplasm"/>
    <property type="evidence" value="ECO:0007669"/>
    <property type="project" value="UniProtKB-SubCell"/>
</dbReference>
<dbReference type="GO" id="GO:0008650">
    <property type="term" value="F:rRNA (uridine-2'-O-)-methyltransferase activity"/>
    <property type="evidence" value="ECO:0007669"/>
    <property type="project" value="UniProtKB-UniRule"/>
</dbReference>
<dbReference type="Gene3D" id="2.40.50.140">
    <property type="entry name" value="Nucleic acid-binding proteins"/>
    <property type="match status" value="1"/>
</dbReference>
<dbReference type="Gene3D" id="3.40.50.150">
    <property type="entry name" value="Vaccinia Virus protein VP39"/>
    <property type="match status" value="1"/>
</dbReference>
<dbReference type="HAMAP" id="MF_01547">
    <property type="entry name" value="RNA_methyltr_E"/>
    <property type="match status" value="1"/>
</dbReference>
<dbReference type="InterPro" id="IPR012340">
    <property type="entry name" value="NA-bd_OB-fold"/>
</dbReference>
<dbReference type="InterPro" id="IPR050082">
    <property type="entry name" value="RNA_methyltr_RlmE"/>
</dbReference>
<dbReference type="InterPro" id="IPR002877">
    <property type="entry name" value="RNA_MeTrfase_FtsJ_dom"/>
</dbReference>
<dbReference type="InterPro" id="IPR015507">
    <property type="entry name" value="rRNA-MeTfrase_E"/>
</dbReference>
<dbReference type="InterPro" id="IPR029063">
    <property type="entry name" value="SAM-dependent_MTases_sf"/>
</dbReference>
<dbReference type="InterPro" id="IPR002792">
    <property type="entry name" value="TRAM_dom"/>
</dbReference>
<dbReference type="PANTHER" id="PTHR10920:SF13">
    <property type="entry name" value="PRE-RRNA 2'-O-RIBOSE RNA METHYLTRANSFERASE FTSJ3"/>
    <property type="match status" value="1"/>
</dbReference>
<dbReference type="PANTHER" id="PTHR10920">
    <property type="entry name" value="RIBOSOMAL RNA METHYLTRANSFERASE"/>
    <property type="match status" value="1"/>
</dbReference>
<dbReference type="Pfam" id="PF01728">
    <property type="entry name" value="FtsJ"/>
    <property type="match status" value="1"/>
</dbReference>
<dbReference type="Pfam" id="PF01938">
    <property type="entry name" value="TRAM"/>
    <property type="match status" value="1"/>
</dbReference>
<dbReference type="SUPFAM" id="SSF50249">
    <property type="entry name" value="Nucleic acid-binding proteins"/>
    <property type="match status" value="1"/>
</dbReference>
<dbReference type="SUPFAM" id="SSF53335">
    <property type="entry name" value="S-adenosyl-L-methionine-dependent methyltransferases"/>
    <property type="match status" value="1"/>
</dbReference>
<dbReference type="PROSITE" id="PS50926">
    <property type="entry name" value="TRAM"/>
    <property type="match status" value="1"/>
</dbReference>
<accession>Q0W1F9</accession>
<protein>
    <recommendedName>
        <fullName evidence="1">Ribosomal RNA large subunit methyltransferase E</fullName>
        <ecNumber evidence="1">2.1.1.166</ecNumber>
    </recommendedName>
    <alternativeName>
        <fullName evidence="1">23S rRNA Um2552 methyltransferase</fullName>
    </alternativeName>
    <alternativeName>
        <fullName evidence="1">rRNA (uridine-2'-O-)-methyltransferase</fullName>
    </alternativeName>
</protein>
<reference key="1">
    <citation type="journal article" date="2006" name="Science">
        <title>Genome of rice cluster I archaea -- the key methane producers in the rice rhizosphere.</title>
        <authorList>
            <person name="Erkel C."/>
            <person name="Kube M."/>
            <person name="Reinhardt R."/>
            <person name="Liesack W."/>
        </authorList>
    </citation>
    <scope>NUCLEOTIDE SEQUENCE [LARGE SCALE GENOMIC DNA]</scope>
    <source>
        <strain>DSM 22066 / NBRC 105507 / MRE50</strain>
    </source>
</reference>
<keyword id="KW-0963">Cytoplasm</keyword>
<keyword id="KW-0489">Methyltransferase</keyword>
<keyword id="KW-1185">Reference proteome</keyword>
<keyword id="KW-0698">rRNA processing</keyword>
<keyword id="KW-0949">S-adenosyl-L-methionine</keyword>
<keyword id="KW-0808">Transferase</keyword>
<comment type="function">
    <text evidence="1">Specifically methylates the uridine in position 2552 of 23S rRNA at the 2'-O position of the ribose in the fully assembled 50S ribosomal subunit.</text>
</comment>
<comment type="catalytic activity">
    <reaction evidence="1">
        <text>uridine(2552) in 23S rRNA + S-adenosyl-L-methionine = 2'-O-methyluridine(2552) in 23S rRNA + S-adenosyl-L-homocysteine + H(+)</text>
        <dbReference type="Rhea" id="RHEA:42720"/>
        <dbReference type="Rhea" id="RHEA-COMP:10202"/>
        <dbReference type="Rhea" id="RHEA-COMP:10203"/>
        <dbReference type="ChEBI" id="CHEBI:15378"/>
        <dbReference type="ChEBI" id="CHEBI:57856"/>
        <dbReference type="ChEBI" id="CHEBI:59789"/>
        <dbReference type="ChEBI" id="CHEBI:65315"/>
        <dbReference type="ChEBI" id="CHEBI:74478"/>
        <dbReference type="EC" id="2.1.1.166"/>
    </reaction>
</comment>
<comment type="subcellular location">
    <subcellularLocation>
        <location evidence="1">Cytoplasm</location>
    </subcellularLocation>
</comment>
<comment type="similarity">
    <text evidence="1">Belongs to the class I-like SAM-binding methyltransferase superfamily. RNA methyltransferase RlmE family.</text>
</comment>
<gene>
    <name evidence="1" type="primary">rlmE</name>
    <name evidence="1" type="synonym">rrmJ</name>
    <name type="ordered locus">UNCMA_04750</name>
    <name type="ORF">RCIX2745</name>
</gene>
<proteinExistence type="inferred from homology"/>